<name>ATPL_RUMCH</name>
<comment type="function">
    <text evidence="1">F(1)F(0) ATP synthase produces ATP from ADP in the presence of a proton or sodium gradient. F-type ATPases consist of two structural domains, F(1) containing the extramembraneous catalytic core and F(0) containing the membrane proton channel, linked together by a central stalk and a peripheral stalk. During catalysis, ATP synthesis in the catalytic domain of F(1) is coupled via a rotary mechanism of the central stalk subunits to proton translocation.</text>
</comment>
<comment type="function">
    <text evidence="1">Key component of the F(0) channel; it plays a direct role in translocation across the membrane. A homomeric c-ring of between 10-14 subunits forms the central stalk rotor element with the F(1) delta and epsilon subunits.</text>
</comment>
<comment type="subunit">
    <text evidence="1">F-type ATPases have 2 components, F(1) - the catalytic core - and F(0) - the membrane proton channel. F(1) has five subunits: alpha(3), beta(3), gamma(1), delta(1), epsilon(1). F(0) has three main subunits: a(1), b(2) and c(10-14). The alpha and beta chains form an alternating ring which encloses part of the gamma chain. F(1) is attached to F(0) by a central stalk formed by the gamma and epsilon chains, while a peripheral stalk is formed by the delta and b chains.</text>
</comment>
<comment type="subcellular location">
    <subcellularLocation>
        <location evidence="1">Cell membrane</location>
        <topology evidence="1">Multi-pass membrane protein</topology>
    </subcellularLocation>
</comment>
<comment type="similarity">
    <text evidence="1">Belongs to the ATPase C chain family.</text>
</comment>
<gene>
    <name evidence="1" type="primary">atpE</name>
    <name type="ordered locus">Ccel_0267</name>
</gene>
<sequence length="76" mass="7310">MAGTGIIAIAAAIAAFTGIGAGIGISLATGKAVEGIARQPEAAGSIRTSLLLGAALAEATAIYGLVVALVLVFLKM</sequence>
<organism>
    <name type="scientific">Ruminiclostridium cellulolyticum (strain ATCC 35319 / DSM 5812 / JCM 6584 / H10)</name>
    <name type="common">Clostridium cellulolyticum</name>
    <dbReference type="NCBI Taxonomy" id="394503"/>
    <lineage>
        <taxon>Bacteria</taxon>
        <taxon>Bacillati</taxon>
        <taxon>Bacillota</taxon>
        <taxon>Clostridia</taxon>
        <taxon>Eubacteriales</taxon>
        <taxon>Oscillospiraceae</taxon>
        <taxon>Ruminiclostridium</taxon>
    </lineage>
</organism>
<keyword id="KW-0066">ATP synthesis</keyword>
<keyword id="KW-1003">Cell membrane</keyword>
<keyword id="KW-0138">CF(0)</keyword>
<keyword id="KW-0375">Hydrogen ion transport</keyword>
<keyword id="KW-0406">Ion transport</keyword>
<keyword id="KW-0446">Lipid-binding</keyword>
<keyword id="KW-0472">Membrane</keyword>
<keyword id="KW-1185">Reference proteome</keyword>
<keyword id="KW-0812">Transmembrane</keyword>
<keyword id="KW-1133">Transmembrane helix</keyword>
<keyword id="KW-0813">Transport</keyword>
<proteinExistence type="inferred from homology"/>
<reference key="1">
    <citation type="submission" date="2009-01" db="EMBL/GenBank/DDBJ databases">
        <title>Complete sequence of Clostridium cellulolyticum H10.</title>
        <authorList>
            <consortium name="US DOE Joint Genome Institute"/>
            <person name="Lucas S."/>
            <person name="Copeland A."/>
            <person name="Lapidus A."/>
            <person name="Glavina del Rio T."/>
            <person name="Dalin E."/>
            <person name="Tice H."/>
            <person name="Bruce D."/>
            <person name="Goodwin L."/>
            <person name="Pitluck S."/>
            <person name="Chertkov O."/>
            <person name="Saunders E."/>
            <person name="Brettin T."/>
            <person name="Detter J.C."/>
            <person name="Han C."/>
            <person name="Larimer F."/>
            <person name="Land M."/>
            <person name="Hauser L."/>
            <person name="Kyrpides N."/>
            <person name="Ivanova N."/>
            <person name="Zhou J."/>
            <person name="Richardson P."/>
        </authorList>
    </citation>
    <scope>NUCLEOTIDE SEQUENCE [LARGE SCALE GENOMIC DNA]</scope>
    <source>
        <strain>ATCC 35319 / DSM 5812 / JCM 6584 / H10</strain>
    </source>
</reference>
<accession>B8I574</accession>
<protein>
    <recommendedName>
        <fullName evidence="1">ATP synthase subunit c</fullName>
    </recommendedName>
    <alternativeName>
        <fullName evidence="1">ATP synthase F(0) sector subunit c</fullName>
    </alternativeName>
    <alternativeName>
        <fullName evidence="1">F-type ATPase subunit c</fullName>
        <shortName evidence="1">F-ATPase subunit c</shortName>
    </alternativeName>
    <alternativeName>
        <fullName evidence="1">Lipid-binding protein</fullName>
    </alternativeName>
</protein>
<feature type="chain" id="PRO_1000184352" description="ATP synthase subunit c">
    <location>
        <begin position="1"/>
        <end position="76"/>
    </location>
</feature>
<feature type="transmembrane region" description="Helical" evidence="1">
    <location>
        <begin position="5"/>
        <end position="25"/>
    </location>
</feature>
<feature type="transmembrane region" description="Helical" evidence="1">
    <location>
        <begin position="54"/>
        <end position="74"/>
    </location>
</feature>
<feature type="site" description="Reversibly protonated during proton transport" evidence="1">
    <location>
        <position position="58"/>
    </location>
</feature>
<dbReference type="EMBL" id="CP001348">
    <property type="protein sequence ID" value="ACL74654.1"/>
    <property type="molecule type" value="Genomic_DNA"/>
</dbReference>
<dbReference type="RefSeq" id="WP_012634719.1">
    <property type="nucleotide sequence ID" value="NC_011898.1"/>
</dbReference>
<dbReference type="SMR" id="B8I574"/>
<dbReference type="STRING" id="394503.Ccel_0267"/>
<dbReference type="KEGG" id="cce:Ccel_0267"/>
<dbReference type="eggNOG" id="COG0636">
    <property type="taxonomic scope" value="Bacteria"/>
</dbReference>
<dbReference type="HOGENOM" id="CLU_148047_2_1_9"/>
<dbReference type="Proteomes" id="UP000001349">
    <property type="component" value="Chromosome"/>
</dbReference>
<dbReference type="GO" id="GO:0005886">
    <property type="term" value="C:plasma membrane"/>
    <property type="evidence" value="ECO:0007669"/>
    <property type="project" value="UniProtKB-SubCell"/>
</dbReference>
<dbReference type="GO" id="GO:0045259">
    <property type="term" value="C:proton-transporting ATP synthase complex"/>
    <property type="evidence" value="ECO:0007669"/>
    <property type="project" value="UniProtKB-KW"/>
</dbReference>
<dbReference type="GO" id="GO:0033177">
    <property type="term" value="C:proton-transporting two-sector ATPase complex, proton-transporting domain"/>
    <property type="evidence" value="ECO:0007669"/>
    <property type="project" value="InterPro"/>
</dbReference>
<dbReference type="GO" id="GO:0008289">
    <property type="term" value="F:lipid binding"/>
    <property type="evidence" value="ECO:0007669"/>
    <property type="project" value="UniProtKB-KW"/>
</dbReference>
<dbReference type="GO" id="GO:0046933">
    <property type="term" value="F:proton-transporting ATP synthase activity, rotational mechanism"/>
    <property type="evidence" value="ECO:0007669"/>
    <property type="project" value="UniProtKB-UniRule"/>
</dbReference>
<dbReference type="CDD" id="cd18121">
    <property type="entry name" value="ATP-synt_Fo_c"/>
    <property type="match status" value="1"/>
</dbReference>
<dbReference type="FunFam" id="1.20.20.10:FF:000002">
    <property type="entry name" value="ATP synthase subunit c"/>
    <property type="match status" value="1"/>
</dbReference>
<dbReference type="Gene3D" id="1.20.20.10">
    <property type="entry name" value="F1F0 ATP synthase subunit C"/>
    <property type="match status" value="1"/>
</dbReference>
<dbReference type="HAMAP" id="MF_01396">
    <property type="entry name" value="ATP_synth_c_bact"/>
    <property type="match status" value="1"/>
</dbReference>
<dbReference type="InterPro" id="IPR005953">
    <property type="entry name" value="ATP_synth_csu_bac/chlpt"/>
</dbReference>
<dbReference type="InterPro" id="IPR000454">
    <property type="entry name" value="ATP_synth_F0_csu"/>
</dbReference>
<dbReference type="InterPro" id="IPR020537">
    <property type="entry name" value="ATP_synth_F0_csu_DDCD_BS"/>
</dbReference>
<dbReference type="InterPro" id="IPR038662">
    <property type="entry name" value="ATP_synth_F0_csu_sf"/>
</dbReference>
<dbReference type="InterPro" id="IPR002379">
    <property type="entry name" value="ATPase_proteolipid_c-like_dom"/>
</dbReference>
<dbReference type="InterPro" id="IPR035921">
    <property type="entry name" value="F/V-ATP_Csub_sf"/>
</dbReference>
<dbReference type="NCBIfam" id="TIGR01260">
    <property type="entry name" value="ATP_synt_c"/>
    <property type="match status" value="1"/>
</dbReference>
<dbReference type="PANTHER" id="PTHR10031">
    <property type="entry name" value="ATP SYNTHASE LIPID-BINDING PROTEIN, MITOCHONDRIAL"/>
    <property type="match status" value="1"/>
</dbReference>
<dbReference type="PANTHER" id="PTHR10031:SF0">
    <property type="entry name" value="ATPASE PROTEIN 9"/>
    <property type="match status" value="1"/>
</dbReference>
<dbReference type="Pfam" id="PF00137">
    <property type="entry name" value="ATP-synt_C"/>
    <property type="match status" value="1"/>
</dbReference>
<dbReference type="PRINTS" id="PR00124">
    <property type="entry name" value="ATPASEC"/>
</dbReference>
<dbReference type="SUPFAM" id="SSF81333">
    <property type="entry name" value="F1F0 ATP synthase subunit C"/>
    <property type="match status" value="1"/>
</dbReference>
<dbReference type="PROSITE" id="PS00605">
    <property type="entry name" value="ATPASE_C"/>
    <property type="match status" value="1"/>
</dbReference>
<evidence type="ECO:0000255" key="1">
    <source>
        <dbReference type="HAMAP-Rule" id="MF_01396"/>
    </source>
</evidence>